<name>FIS_VIBC3</name>
<accession>A5F3S1</accession>
<accession>C3M3V1</accession>
<protein>
    <recommendedName>
        <fullName evidence="1">DNA-binding protein Fis</fullName>
    </recommendedName>
</protein>
<sequence length="98" mass="11112">MFEQNLTSEALTVTTVTSQDQITQKPLRDSVKASLKNYLAQLNGQEVTELYELVLAEVEQPLLDTIMQYTRGNQTRAATMMGINRGTLRKKLKKYGMN</sequence>
<feature type="chain" id="PRO_1000071566" description="DNA-binding protein Fis">
    <location>
        <begin position="1"/>
        <end position="98"/>
    </location>
</feature>
<feature type="DNA-binding region" description="H-T-H motif" evidence="1">
    <location>
        <begin position="74"/>
        <end position="93"/>
    </location>
</feature>
<comment type="function">
    <text evidence="1">Activates ribosomal RNA transcription. Plays a direct role in upstream activation of rRNA promoters.</text>
</comment>
<comment type="subunit">
    <text evidence="1">Homodimer.</text>
</comment>
<comment type="similarity">
    <text evidence="1">Belongs to the transcriptional regulatory Fis family.</text>
</comment>
<keyword id="KW-0010">Activator</keyword>
<keyword id="KW-0238">DNA-binding</keyword>
<keyword id="KW-0804">Transcription</keyword>
<keyword id="KW-0805">Transcription regulation</keyword>
<reference key="1">
    <citation type="submission" date="2007-03" db="EMBL/GenBank/DDBJ databases">
        <authorList>
            <person name="Heidelberg J."/>
        </authorList>
    </citation>
    <scope>NUCLEOTIDE SEQUENCE [LARGE SCALE GENOMIC DNA]</scope>
    <source>
        <strain>ATCC 39541 / Classical Ogawa 395 / O395</strain>
    </source>
</reference>
<reference key="2">
    <citation type="journal article" date="2008" name="PLoS ONE">
        <title>A recalibrated molecular clock and independent origins for the cholera pandemic clones.</title>
        <authorList>
            <person name="Feng L."/>
            <person name="Reeves P.R."/>
            <person name="Lan R."/>
            <person name="Ren Y."/>
            <person name="Gao C."/>
            <person name="Zhou Z."/>
            <person name="Ren Y."/>
            <person name="Cheng J."/>
            <person name="Wang W."/>
            <person name="Wang J."/>
            <person name="Qian W."/>
            <person name="Li D."/>
            <person name="Wang L."/>
        </authorList>
    </citation>
    <scope>NUCLEOTIDE SEQUENCE [LARGE SCALE GENOMIC DNA]</scope>
    <source>
        <strain>ATCC 39541 / Classical Ogawa 395 / O395</strain>
    </source>
</reference>
<evidence type="ECO:0000255" key="1">
    <source>
        <dbReference type="HAMAP-Rule" id="MF_00166"/>
    </source>
</evidence>
<organism>
    <name type="scientific">Vibrio cholerae serotype O1 (strain ATCC 39541 / Classical Ogawa 395 / O395)</name>
    <dbReference type="NCBI Taxonomy" id="345073"/>
    <lineage>
        <taxon>Bacteria</taxon>
        <taxon>Pseudomonadati</taxon>
        <taxon>Pseudomonadota</taxon>
        <taxon>Gammaproteobacteria</taxon>
        <taxon>Vibrionales</taxon>
        <taxon>Vibrionaceae</taxon>
        <taxon>Vibrio</taxon>
    </lineage>
</organism>
<dbReference type="EMBL" id="CP000627">
    <property type="protein sequence ID" value="ABQ20535.1"/>
    <property type="molecule type" value="Genomic_DNA"/>
</dbReference>
<dbReference type="EMBL" id="CP001235">
    <property type="protein sequence ID" value="ACP08359.1"/>
    <property type="molecule type" value="Genomic_DNA"/>
</dbReference>
<dbReference type="RefSeq" id="WP_000462885.1">
    <property type="nucleotide sequence ID" value="NZ_JAACZH010000020.1"/>
</dbReference>
<dbReference type="SMR" id="A5F3S1"/>
<dbReference type="GeneID" id="97171130"/>
<dbReference type="KEGG" id="vco:VC0395_A2685"/>
<dbReference type="KEGG" id="vcr:VC395_0334"/>
<dbReference type="PATRIC" id="fig|345073.21.peg.323"/>
<dbReference type="eggNOG" id="COG2901">
    <property type="taxonomic scope" value="Bacteria"/>
</dbReference>
<dbReference type="HOGENOM" id="CLU_158040_3_0_6"/>
<dbReference type="OrthoDB" id="9802388at2"/>
<dbReference type="Proteomes" id="UP000000249">
    <property type="component" value="Chromosome 2"/>
</dbReference>
<dbReference type="GO" id="GO:0003700">
    <property type="term" value="F:DNA-binding transcription factor activity"/>
    <property type="evidence" value="ECO:0007669"/>
    <property type="project" value="UniProtKB-UniRule"/>
</dbReference>
<dbReference type="GO" id="GO:0043565">
    <property type="term" value="F:sequence-specific DNA binding"/>
    <property type="evidence" value="ECO:0007669"/>
    <property type="project" value="InterPro"/>
</dbReference>
<dbReference type="FunFam" id="1.10.10.60:FF:000006">
    <property type="entry name" value="DNA-binding protein Fis"/>
    <property type="match status" value="1"/>
</dbReference>
<dbReference type="Gene3D" id="1.10.10.60">
    <property type="entry name" value="Homeodomain-like"/>
    <property type="match status" value="1"/>
</dbReference>
<dbReference type="HAMAP" id="MF_00166">
    <property type="entry name" value="DNA_binding_Fis"/>
    <property type="match status" value="1"/>
</dbReference>
<dbReference type="InterPro" id="IPR005412">
    <property type="entry name" value="Fis_DNA-bd"/>
</dbReference>
<dbReference type="InterPro" id="IPR009057">
    <property type="entry name" value="Homeodomain-like_sf"/>
</dbReference>
<dbReference type="InterPro" id="IPR002197">
    <property type="entry name" value="HTH_Fis"/>
</dbReference>
<dbReference type="InterPro" id="IPR050207">
    <property type="entry name" value="Trans_regulatory_Fis"/>
</dbReference>
<dbReference type="NCBIfam" id="NF001659">
    <property type="entry name" value="PRK00430.1"/>
    <property type="match status" value="1"/>
</dbReference>
<dbReference type="PANTHER" id="PTHR47918">
    <property type="entry name" value="DNA-BINDING PROTEIN FIS"/>
    <property type="match status" value="1"/>
</dbReference>
<dbReference type="PANTHER" id="PTHR47918:SF1">
    <property type="entry name" value="DNA-BINDING PROTEIN FIS"/>
    <property type="match status" value="1"/>
</dbReference>
<dbReference type="Pfam" id="PF02954">
    <property type="entry name" value="HTH_8"/>
    <property type="match status" value="1"/>
</dbReference>
<dbReference type="PIRSF" id="PIRSF002097">
    <property type="entry name" value="DNA-binding_Fis"/>
    <property type="match status" value="1"/>
</dbReference>
<dbReference type="PRINTS" id="PR01591">
    <property type="entry name" value="DNABINDNGFIS"/>
</dbReference>
<dbReference type="PRINTS" id="PR01590">
    <property type="entry name" value="HTHFIS"/>
</dbReference>
<dbReference type="SUPFAM" id="SSF46689">
    <property type="entry name" value="Homeodomain-like"/>
    <property type="match status" value="1"/>
</dbReference>
<proteinExistence type="inferred from homology"/>
<gene>
    <name evidence="1" type="primary">fis</name>
    <name type="ordered locus">VC0395_A2685</name>
    <name type="ordered locus">VC395_0334</name>
</gene>